<protein>
    <recommendedName>
        <fullName evidence="1">DNA-directed RNA polymerase subunit omega</fullName>
        <shortName evidence="1">RNAP omega subunit</shortName>
        <ecNumber evidence="1">2.7.7.6</ecNumber>
    </recommendedName>
    <alternativeName>
        <fullName evidence="1">RNA polymerase omega subunit</fullName>
    </alternativeName>
    <alternativeName>
        <fullName evidence="1">Transcriptase subunit omega</fullName>
    </alternativeName>
</protein>
<reference key="1">
    <citation type="journal article" date="2007" name="J. Bacteriol.">
        <title>Genome of the opportunistic pathogen Streptococcus sanguinis.</title>
        <authorList>
            <person name="Xu P."/>
            <person name="Alves J.M."/>
            <person name="Kitten T."/>
            <person name="Brown A."/>
            <person name="Chen Z."/>
            <person name="Ozaki L.S."/>
            <person name="Manque P."/>
            <person name="Ge X."/>
            <person name="Serrano M.G."/>
            <person name="Puiu D."/>
            <person name="Hendricks S."/>
            <person name="Wang Y."/>
            <person name="Chaplin M.D."/>
            <person name="Akan D."/>
            <person name="Paik S."/>
            <person name="Peterson D.L."/>
            <person name="Macrina F.L."/>
            <person name="Buck G.A."/>
        </authorList>
    </citation>
    <scope>NUCLEOTIDE SEQUENCE [LARGE SCALE GENOMIC DNA]</scope>
    <source>
        <strain>SK36</strain>
    </source>
</reference>
<keyword id="KW-0240">DNA-directed RNA polymerase</keyword>
<keyword id="KW-0548">Nucleotidyltransferase</keyword>
<keyword id="KW-1185">Reference proteome</keyword>
<keyword id="KW-0804">Transcription</keyword>
<keyword id="KW-0808">Transferase</keyword>
<proteinExistence type="inferred from homology"/>
<organism>
    <name type="scientific">Streptococcus sanguinis (strain SK36)</name>
    <dbReference type="NCBI Taxonomy" id="388919"/>
    <lineage>
        <taxon>Bacteria</taxon>
        <taxon>Bacillati</taxon>
        <taxon>Bacillota</taxon>
        <taxon>Bacilli</taxon>
        <taxon>Lactobacillales</taxon>
        <taxon>Streptococcaceae</taxon>
        <taxon>Streptococcus</taxon>
    </lineage>
</organism>
<accession>A3CPX6</accession>
<evidence type="ECO:0000255" key="1">
    <source>
        <dbReference type="HAMAP-Rule" id="MF_00366"/>
    </source>
</evidence>
<evidence type="ECO:0000256" key="2">
    <source>
        <dbReference type="SAM" id="MobiDB-lite"/>
    </source>
</evidence>
<feature type="chain" id="PRO_1000059916" description="DNA-directed RNA polymerase subunit omega">
    <location>
        <begin position="1"/>
        <end position="104"/>
    </location>
</feature>
<feature type="region of interest" description="Disordered" evidence="2">
    <location>
        <begin position="60"/>
        <end position="104"/>
    </location>
</feature>
<feature type="compositionally biased region" description="Basic and acidic residues" evidence="2">
    <location>
        <begin position="63"/>
        <end position="104"/>
    </location>
</feature>
<dbReference type="EC" id="2.7.7.6" evidence="1"/>
<dbReference type="EMBL" id="CP000387">
    <property type="protein sequence ID" value="ABN45231.1"/>
    <property type="molecule type" value="Genomic_DNA"/>
</dbReference>
<dbReference type="RefSeq" id="WP_002893503.1">
    <property type="nucleotide sequence ID" value="NZ_CAXTYR010000003.1"/>
</dbReference>
<dbReference type="RefSeq" id="YP_001035781.1">
    <property type="nucleotide sequence ID" value="NC_009009.1"/>
</dbReference>
<dbReference type="SMR" id="A3CPX6"/>
<dbReference type="STRING" id="388919.SSA_1850"/>
<dbReference type="KEGG" id="ssa:SSA_1850"/>
<dbReference type="PATRIC" id="fig|388919.9.peg.1755"/>
<dbReference type="eggNOG" id="COG1758">
    <property type="taxonomic scope" value="Bacteria"/>
</dbReference>
<dbReference type="HOGENOM" id="CLU_125406_0_0_9"/>
<dbReference type="OrthoDB" id="9815459at2"/>
<dbReference type="Proteomes" id="UP000002148">
    <property type="component" value="Chromosome"/>
</dbReference>
<dbReference type="GO" id="GO:0000428">
    <property type="term" value="C:DNA-directed RNA polymerase complex"/>
    <property type="evidence" value="ECO:0007669"/>
    <property type="project" value="UniProtKB-KW"/>
</dbReference>
<dbReference type="GO" id="GO:0003677">
    <property type="term" value="F:DNA binding"/>
    <property type="evidence" value="ECO:0007669"/>
    <property type="project" value="UniProtKB-UniRule"/>
</dbReference>
<dbReference type="GO" id="GO:0003899">
    <property type="term" value="F:DNA-directed RNA polymerase activity"/>
    <property type="evidence" value="ECO:0007669"/>
    <property type="project" value="UniProtKB-UniRule"/>
</dbReference>
<dbReference type="GO" id="GO:0006351">
    <property type="term" value="P:DNA-templated transcription"/>
    <property type="evidence" value="ECO:0007669"/>
    <property type="project" value="UniProtKB-UniRule"/>
</dbReference>
<dbReference type="Gene3D" id="3.90.940.10">
    <property type="match status" value="1"/>
</dbReference>
<dbReference type="HAMAP" id="MF_00366">
    <property type="entry name" value="RNApol_bact_RpoZ"/>
    <property type="match status" value="1"/>
</dbReference>
<dbReference type="InterPro" id="IPR003716">
    <property type="entry name" value="DNA-dir_RNA_pol_omega"/>
</dbReference>
<dbReference type="InterPro" id="IPR006110">
    <property type="entry name" value="Pol_omega/Rpo6/RPB6"/>
</dbReference>
<dbReference type="InterPro" id="IPR036161">
    <property type="entry name" value="RPB6/omega-like_sf"/>
</dbReference>
<dbReference type="NCBIfam" id="TIGR00690">
    <property type="entry name" value="rpoZ"/>
    <property type="match status" value="1"/>
</dbReference>
<dbReference type="PANTHER" id="PTHR34476">
    <property type="entry name" value="DNA-DIRECTED RNA POLYMERASE SUBUNIT OMEGA"/>
    <property type="match status" value="1"/>
</dbReference>
<dbReference type="PANTHER" id="PTHR34476:SF1">
    <property type="entry name" value="DNA-DIRECTED RNA POLYMERASE SUBUNIT OMEGA"/>
    <property type="match status" value="1"/>
</dbReference>
<dbReference type="Pfam" id="PF01192">
    <property type="entry name" value="RNA_pol_Rpb6"/>
    <property type="match status" value="1"/>
</dbReference>
<dbReference type="SMART" id="SM01409">
    <property type="entry name" value="RNA_pol_Rpb6"/>
    <property type="match status" value="1"/>
</dbReference>
<dbReference type="SUPFAM" id="SSF63562">
    <property type="entry name" value="RPB6/omega subunit-like"/>
    <property type="match status" value="1"/>
</dbReference>
<sequence>MMLKPSIDTLLDKVPSKYSLVILEAKRAHELEAGAPATQEFKSVKSTLRALEEIESGNVVIHPDPEGKREAVRRRAEEERLRKEEEERKIKEQIAKEKEEGEKI</sequence>
<comment type="function">
    <text evidence="1">Promotes RNA polymerase assembly. Latches the N- and C-terminal regions of the beta' subunit thereby facilitating its interaction with the beta and alpha subunits.</text>
</comment>
<comment type="catalytic activity">
    <reaction evidence="1">
        <text>RNA(n) + a ribonucleoside 5'-triphosphate = RNA(n+1) + diphosphate</text>
        <dbReference type="Rhea" id="RHEA:21248"/>
        <dbReference type="Rhea" id="RHEA-COMP:14527"/>
        <dbReference type="Rhea" id="RHEA-COMP:17342"/>
        <dbReference type="ChEBI" id="CHEBI:33019"/>
        <dbReference type="ChEBI" id="CHEBI:61557"/>
        <dbReference type="ChEBI" id="CHEBI:140395"/>
        <dbReference type="EC" id="2.7.7.6"/>
    </reaction>
</comment>
<comment type="subunit">
    <text evidence="1">The RNAP catalytic core consists of 2 alpha, 1 beta, 1 beta' and 1 omega subunit. When a sigma factor is associated with the core the holoenzyme is formed, which can initiate transcription.</text>
</comment>
<comment type="similarity">
    <text evidence="1">Belongs to the RNA polymerase subunit omega family.</text>
</comment>
<name>RPOZ_STRSV</name>
<gene>
    <name evidence="1" type="primary">rpoZ</name>
    <name type="ordered locus">SSA_1850</name>
</gene>